<accession>A2BT61</accession>
<name>RPOB_PROMS</name>
<reference key="1">
    <citation type="journal article" date="2007" name="PLoS Genet.">
        <title>Patterns and implications of gene gain and loss in the evolution of Prochlorococcus.</title>
        <authorList>
            <person name="Kettler G.C."/>
            <person name="Martiny A.C."/>
            <person name="Huang K."/>
            <person name="Zucker J."/>
            <person name="Coleman M.L."/>
            <person name="Rodrigue S."/>
            <person name="Chen F."/>
            <person name="Lapidus A."/>
            <person name="Ferriera S."/>
            <person name="Johnson J."/>
            <person name="Steglich C."/>
            <person name="Church G.M."/>
            <person name="Richardson P."/>
            <person name="Chisholm S.W."/>
        </authorList>
    </citation>
    <scope>NUCLEOTIDE SEQUENCE [LARGE SCALE GENOMIC DNA]</scope>
    <source>
        <strain>AS9601</strain>
    </source>
</reference>
<proteinExistence type="inferred from homology"/>
<feature type="chain" id="PRO_0000300369" description="DNA-directed RNA polymerase subunit beta">
    <location>
        <begin position="1"/>
        <end position="1097"/>
    </location>
</feature>
<feature type="region of interest" description="Disordered" evidence="2">
    <location>
        <begin position="1072"/>
        <end position="1097"/>
    </location>
</feature>
<feature type="compositionally biased region" description="Polar residues" evidence="2">
    <location>
        <begin position="1077"/>
        <end position="1091"/>
    </location>
</feature>
<evidence type="ECO:0000255" key="1">
    <source>
        <dbReference type="HAMAP-Rule" id="MF_01321"/>
    </source>
</evidence>
<evidence type="ECO:0000256" key="2">
    <source>
        <dbReference type="SAM" id="MobiDB-lite"/>
    </source>
</evidence>
<dbReference type="EC" id="2.7.7.6" evidence="1"/>
<dbReference type="EMBL" id="CP000551">
    <property type="protein sequence ID" value="ABM70972.1"/>
    <property type="molecule type" value="Genomic_DNA"/>
</dbReference>
<dbReference type="RefSeq" id="WP_011819100.1">
    <property type="nucleotide sequence ID" value="NC_008816.1"/>
</dbReference>
<dbReference type="SMR" id="A2BT61"/>
<dbReference type="STRING" id="146891.A9601_16891"/>
<dbReference type="KEGG" id="pmb:A9601_16891"/>
<dbReference type="eggNOG" id="COG0085">
    <property type="taxonomic scope" value="Bacteria"/>
</dbReference>
<dbReference type="HOGENOM" id="CLU_000524_4_3_3"/>
<dbReference type="OrthoDB" id="9803954at2"/>
<dbReference type="Proteomes" id="UP000002590">
    <property type="component" value="Chromosome"/>
</dbReference>
<dbReference type="GO" id="GO:0000428">
    <property type="term" value="C:DNA-directed RNA polymerase complex"/>
    <property type="evidence" value="ECO:0007669"/>
    <property type="project" value="UniProtKB-KW"/>
</dbReference>
<dbReference type="GO" id="GO:0003677">
    <property type="term" value="F:DNA binding"/>
    <property type="evidence" value="ECO:0007669"/>
    <property type="project" value="UniProtKB-UniRule"/>
</dbReference>
<dbReference type="GO" id="GO:0003899">
    <property type="term" value="F:DNA-directed RNA polymerase activity"/>
    <property type="evidence" value="ECO:0007669"/>
    <property type="project" value="UniProtKB-UniRule"/>
</dbReference>
<dbReference type="GO" id="GO:0032549">
    <property type="term" value="F:ribonucleoside binding"/>
    <property type="evidence" value="ECO:0007669"/>
    <property type="project" value="InterPro"/>
</dbReference>
<dbReference type="GO" id="GO:0006351">
    <property type="term" value="P:DNA-templated transcription"/>
    <property type="evidence" value="ECO:0007669"/>
    <property type="project" value="UniProtKB-UniRule"/>
</dbReference>
<dbReference type="CDD" id="cd00653">
    <property type="entry name" value="RNA_pol_B_RPB2"/>
    <property type="match status" value="1"/>
</dbReference>
<dbReference type="FunFam" id="3.90.1800.10:FF:000001">
    <property type="entry name" value="DNA-directed RNA polymerase subunit beta"/>
    <property type="match status" value="1"/>
</dbReference>
<dbReference type="Gene3D" id="2.40.50.100">
    <property type="match status" value="1"/>
</dbReference>
<dbReference type="Gene3D" id="2.40.50.150">
    <property type="match status" value="1"/>
</dbReference>
<dbReference type="Gene3D" id="3.90.1100.10">
    <property type="match status" value="1"/>
</dbReference>
<dbReference type="Gene3D" id="2.30.150.10">
    <property type="entry name" value="DNA-directed RNA polymerase, beta subunit, external 1 domain"/>
    <property type="match status" value="1"/>
</dbReference>
<dbReference type="Gene3D" id="2.40.270.10">
    <property type="entry name" value="DNA-directed RNA polymerase, subunit 2, domain 6"/>
    <property type="match status" value="1"/>
</dbReference>
<dbReference type="Gene3D" id="3.90.1800.10">
    <property type="entry name" value="RNA polymerase alpha subunit dimerisation domain"/>
    <property type="match status" value="1"/>
</dbReference>
<dbReference type="Gene3D" id="3.90.1110.10">
    <property type="entry name" value="RNA polymerase Rpb2, domain 2"/>
    <property type="match status" value="1"/>
</dbReference>
<dbReference type="HAMAP" id="MF_01321">
    <property type="entry name" value="RNApol_bact_RpoB"/>
    <property type="match status" value="1"/>
</dbReference>
<dbReference type="InterPro" id="IPR042107">
    <property type="entry name" value="DNA-dir_RNA_pol_bsu_ext_1_sf"/>
</dbReference>
<dbReference type="InterPro" id="IPR019462">
    <property type="entry name" value="DNA-dir_RNA_pol_bsu_external_1"/>
</dbReference>
<dbReference type="InterPro" id="IPR015712">
    <property type="entry name" value="DNA-dir_RNA_pol_su2"/>
</dbReference>
<dbReference type="InterPro" id="IPR007120">
    <property type="entry name" value="DNA-dir_RNAP_su2_dom"/>
</dbReference>
<dbReference type="InterPro" id="IPR037033">
    <property type="entry name" value="DNA-dir_RNAP_su2_hyb_sf"/>
</dbReference>
<dbReference type="InterPro" id="IPR010243">
    <property type="entry name" value="RNA_pol_bsu_bac"/>
</dbReference>
<dbReference type="InterPro" id="IPR007121">
    <property type="entry name" value="RNA_pol_bsu_CS"/>
</dbReference>
<dbReference type="InterPro" id="IPR007644">
    <property type="entry name" value="RNA_pol_bsu_protrusion"/>
</dbReference>
<dbReference type="InterPro" id="IPR007642">
    <property type="entry name" value="RNA_pol_Rpb2_2"/>
</dbReference>
<dbReference type="InterPro" id="IPR037034">
    <property type="entry name" value="RNA_pol_Rpb2_2_sf"/>
</dbReference>
<dbReference type="InterPro" id="IPR007645">
    <property type="entry name" value="RNA_pol_Rpb2_3"/>
</dbReference>
<dbReference type="InterPro" id="IPR007641">
    <property type="entry name" value="RNA_pol_Rpb2_7"/>
</dbReference>
<dbReference type="InterPro" id="IPR014724">
    <property type="entry name" value="RNA_pol_RPB2_OB-fold"/>
</dbReference>
<dbReference type="NCBIfam" id="NF001616">
    <property type="entry name" value="PRK00405.1"/>
    <property type="match status" value="1"/>
</dbReference>
<dbReference type="NCBIfam" id="TIGR02013">
    <property type="entry name" value="rpoB"/>
    <property type="match status" value="1"/>
</dbReference>
<dbReference type="PANTHER" id="PTHR20856">
    <property type="entry name" value="DNA-DIRECTED RNA POLYMERASE I SUBUNIT 2"/>
    <property type="match status" value="1"/>
</dbReference>
<dbReference type="Pfam" id="PF04563">
    <property type="entry name" value="RNA_pol_Rpb2_1"/>
    <property type="match status" value="1"/>
</dbReference>
<dbReference type="Pfam" id="PF04561">
    <property type="entry name" value="RNA_pol_Rpb2_2"/>
    <property type="match status" value="1"/>
</dbReference>
<dbReference type="Pfam" id="PF04565">
    <property type="entry name" value="RNA_pol_Rpb2_3"/>
    <property type="match status" value="1"/>
</dbReference>
<dbReference type="Pfam" id="PF10385">
    <property type="entry name" value="RNA_pol_Rpb2_45"/>
    <property type="match status" value="1"/>
</dbReference>
<dbReference type="Pfam" id="PF00562">
    <property type="entry name" value="RNA_pol_Rpb2_6"/>
    <property type="match status" value="1"/>
</dbReference>
<dbReference type="Pfam" id="PF04560">
    <property type="entry name" value="RNA_pol_Rpb2_7"/>
    <property type="match status" value="1"/>
</dbReference>
<dbReference type="SUPFAM" id="SSF64484">
    <property type="entry name" value="beta and beta-prime subunits of DNA dependent RNA-polymerase"/>
    <property type="match status" value="1"/>
</dbReference>
<dbReference type="PROSITE" id="PS01166">
    <property type="entry name" value="RNA_POL_BETA"/>
    <property type="match status" value="1"/>
</dbReference>
<gene>
    <name evidence="1" type="primary">rpoB</name>
    <name type="ordered locus">A9601_16891</name>
</gene>
<protein>
    <recommendedName>
        <fullName evidence="1">DNA-directed RNA polymerase subunit beta</fullName>
        <shortName evidence="1">RNAP subunit beta</shortName>
        <ecNumber evidence="1">2.7.7.6</ecNumber>
    </recommendedName>
    <alternativeName>
        <fullName evidence="1">RNA polymerase subunit beta</fullName>
    </alternativeName>
    <alternativeName>
        <fullName evidence="1">Transcriptase subunit beta</fullName>
    </alternativeName>
</protein>
<sequence length="1097" mass="122972">MSSSALQVAKTATYLPDLVEVQRASFKWFLEKGLIEELQNFSPISDYTGKLELHFIGEEYRLKRPRHDVEEAKRRDATFASQMYVTCRLINKETGEIKEQEVFIGELPLMTERGTFIINGAERVIVNQIVRSPGVYFKDELDKNGRRTYNANVIPNRGAWLKFETDKNNLLYVRVDKTRKINAHVLMRAMGLSDNDVVDKLRHPEFYQNSIDSANDEGINSEDQALLELYKKLRPGEPPSVSGGQQLLNSRFFDPKRYDLGRVGRYKINKKLRLTVPDDVRTLTHEDVLSTIDYLINLELDIGGASLDDIDHLGNRRVRSVGELLQNQVRVGLNRLERIIKERMTVGETDSLTPAQLVNPKPLVAAIKEFFGSSQLSQFMDQTNPLAELTHKRRISALGPGGLTRERAGFAVRDIHPSHYGRLCPIETPEGPNAGLINSLATHARVNEYGFIETPFWEVKNGKVNKEGNPVYLSADLEDECRVAPGDVATDKDGNIIADLIPVRYRQDFEKVPPHQVDYVQLSPVQVISVATSLIPFLEHDDANRALMGSNMQRQAVPLLRPERPLVGTGLESQVARDSGMVPITKVNGTVSYVDANEIVVKDDHGNEHFHYLQKYQRSNQDTCLNQRPIVKIGDKVISGQVLADGSACEGGEIALGQNVLIAYMPWEGYNYEDAILVSERMVTDDLYTSVHIEKYEIEARQTKLGPEEITREIPNISEESLNNLDEMGIIRIGAFVESGDILVGKVTPKGESDQPPEEKLLRAIFGEKARDVRDNSLRVPKTEKGRVLDVRIYTREQGDELPPGANMVVRVYVAQRRKIQVGDKMAGRHGNKGIISRILPREDMPYLPDGTPVDIVLNPLGVPSRMNVGQVFELLMGWAAANLNCRVKVVPFDEMYGAEKSHQTVQAFLEEASKQPGKAWVYNPEDPGKLLLKDGRTGEPFDQPVAVGYSHFLKLVHLVDDKIHARSTGPYSLVTQQPLGGKAQQGGQRLGEMEVWALEAYGAAYTLQELLTVKSDDMQGRNEALNAIVKGKPIPRPGTPESFKVLMRELQSLGLDIGVYTDEGKEVDLMQDINPRRNTPSRPTYESLGTSEYEED</sequence>
<comment type="function">
    <text evidence="1">DNA-dependent RNA polymerase catalyzes the transcription of DNA into RNA using the four ribonucleoside triphosphates as substrates.</text>
</comment>
<comment type="catalytic activity">
    <reaction evidence="1">
        <text>RNA(n) + a ribonucleoside 5'-triphosphate = RNA(n+1) + diphosphate</text>
        <dbReference type="Rhea" id="RHEA:21248"/>
        <dbReference type="Rhea" id="RHEA-COMP:14527"/>
        <dbReference type="Rhea" id="RHEA-COMP:17342"/>
        <dbReference type="ChEBI" id="CHEBI:33019"/>
        <dbReference type="ChEBI" id="CHEBI:61557"/>
        <dbReference type="ChEBI" id="CHEBI:140395"/>
        <dbReference type="EC" id="2.7.7.6"/>
    </reaction>
</comment>
<comment type="subunit">
    <text evidence="1">In cyanobacteria the RNAP catalytic core is composed of 2 alpha, 1 beta, 1 beta', 1 gamma and 1 omega subunit. When a sigma factor is associated with the core the holoenzyme is formed, which can initiate transcription.</text>
</comment>
<comment type="similarity">
    <text evidence="1">Belongs to the RNA polymerase beta chain family.</text>
</comment>
<organism>
    <name type="scientific">Prochlorococcus marinus (strain AS9601)</name>
    <dbReference type="NCBI Taxonomy" id="146891"/>
    <lineage>
        <taxon>Bacteria</taxon>
        <taxon>Bacillati</taxon>
        <taxon>Cyanobacteriota</taxon>
        <taxon>Cyanophyceae</taxon>
        <taxon>Synechococcales</taxon>
        <taxon>Prochlorococcaceae</taxon>
        <taxon>Prochlorococcus</taxon>
    </lineage>
</organism>
<keyword id="KW-0240">DNA-directed RNA polymerase</keyword>
<keyword id="KW-0548">Nucleotidyltransferase</keyword>
<keyword id="KW-0804">Transcription</keyword>
<keyword id="KW-0808">Transferase</keyword>